<organism>
    <name type="scientific">Neltuma juliflora</name>
    <name type="common">Mesquite</name>
    <name type="synonym">Prosopis juliflora</name>
    <dbReference type="NCBI Taxonomy" id="3128859"/>
    <lineage>
        <taxon>Eukaryota</taxon>
        <taxon>Viridiplantae</taxon>
        <taxon>Streptophyta</taxon>
        <taxon>Embryophyta</taxon>
        <taxon>Tracheophyta</taxon>
        <taxon>Spermatophyta</taxon>
        <taxon>Magnoliopsida</taxon>
        <taxon>eudicotyledons</taxon>
        <taxon>Gunneridae</taxon>
        <taxon>Pentapetalae</taxon>
        <taxon>rosids</taxon>
        <taxon>fabids</taxon>
        <taxon>Fabales</taxon>
        <taxon>Fabaceae</taxon>
        <taxon>Caesalpinioideae</taxon>
        <taxon>mimosoid clade</taxon>
        <taxon>Acacieae</taxon>
        <taxon>Neltuma</taxon>
    </lineage>
</organism>
<keyword id="KW-0903">Direct protein sequencing</keyword>
<keyword id="KW-1015">Disulfide bond</keyword>
<keyword id="KW-0646">Protease inhibitor</keyword>
<keyword id="KW-0722">Serine protease inhibitor</keyword>
<accession>P32734</accession>
<name>ID5B_NELJU</name>
<feature type="chain" id="PRO_0000083301" description="Kunitz-type trypsin inhibitor beta chain">
    <location>
        <begin position="1"/>
        <end position="38"/>
    </location>
</feature>
<feature type="disulfide bond" description="Interchain (with alpha chain)" evidence="1">
    <location>
        <position position="4"/>
    </location>
</feature>
<dbReference type="PIR" id="A45588">
    <property type="entry name" value="A45588"/>
</dbReference>
<dbReference type="SMR" id="P32734"/>
<dbReference type="MEROPS" id="I03.003"/>
<dbReference type="GO" id="GO:0004867">
    <property type="term" value="F:serine-type endopeptidase inhibitor activity"/>
    <property type="evidence" value="ECO:0007669"/>
    <property type="project" value="UniProtKB-KW"/>
</dbReference>
<dbReference type="Gene3D" id="2.80.10.50">
    <property type="match status" value="1"/>
</dbReference>
<dbReference type="InterPro" id="IPR011065">
    <property type="entry name" value="Kunitz_inhibitor_STI-like_sf"/>
</dbReference>
<dbReference type="SUPFAM" id="SSF50386">
    <property type="entry name" value="STI-like"/>
    <property type="match status" value="1"/>
</dbReference>
<evidence type="ECO:0000250" key="1"/>
<evidence type="ECO:0000305" key="2"/>
<sequence length="38" mass="4313">SDRCKDLGISIDEENNRRLVVKDGDPLAVRFVKANRRG</sequence>
<proteinExistence type="evidence at protein level"/>
<protein>
    <recommendedName>
        <fullName>Kunitz-type trypsin inhibitor beta chain</fullName>
    </recommendedName>
</protein>
<comment type="function">
    <text>Inhibition of trypsin.</text>
</comment>
<comment type="subunit">
    <text>Heterodimer of an alpha and a beta chain linked by a disulfide bond.</text>
</comment>
<comment type="similarity">
    <text evidence="2">Belongs to the protease inhibitor I3 (leguminous Kunitz-type inhibitor) family.</text>
</comment>
<reference key="1">
    <citation type="journal article" date="1991" name="Phytochemistry">
        <title>The complete amino acid sequence of the major Kunitz trypsin inhibitor from the seeds of Prosopsis juliflora.</title>
        <authorList>
            <person name="Negreiros A.N."/>
            <person name="Carvalho M.M."/>
            <person name="Xavier Filho J."/>
            <person name="Blanco-Labra A."/>
            <person name="Shewry P.R."/>
            <person name="Richardson M."/>
        </authorList>
    </citation>
    <scope>PROTEIN SEQUENCE</scope>
    <source>
        <tissue>Seed</tissue>
    </source>
</reference>